<proteinExistence type="inferred from homology"/>
<comment type="function">
    <text evidence="1">Transfers the gamma-phosphate of ATP to the 4'-position of a tetraacyldisaccharide 1-phosphate intermediate (termed DS-1-P) to form tetraacyldisaccharide 1,4'-bis-phosphate (lipid IVA).</text>
</comment>
<comment type="catalytic activity">
    <reaction evidence="1">
        <text>a lipid A disaccharide + ATP = a lipid IVA + ADP + H(+)</text>
        <dbReference type="Rhea" id="RHEA:67840"/>
        <dbReference type="ChEBI" id="CHEBI:15378"/>
        <dbReference type="ChEBI" id="CHEBI:30616"/>
        <dbReference type="ChEBI" id="CHEBI:176343"/>
        <dbReference type="ChEBI" id="CHEBI:176425"/>
        <dbReference type="ChEBI" id="CHEBI:456216"/>
        <dbReference type="EC" id="2.7.1.130"/>
    </reaction>
</comment>
<comment type="pathway">
    <text evidence="1">Glycolipid biosynthesis; lipid IV(A) biosynthesis; lipid IV(A) from (3R)-3-hydroxytetradecanoyl-[acyl-carrier-protein] and UDP-N-acetyl-alpha-D-glucosamine: step 6/6.</text>
</comment>
<comment type="similarity">
    <text evidence="1">Belongs to the LpxK family.</text>
</comment>
<keyword id="KW-0067">ATP-binding</keyword>
<keyword id="KW-0418">Kinase</keyword>
<keyword id="KW-0441">Lipid A biosynthesis</keyword>
<keyword id="KW-0444">Lipid biosynthesis</keyword>
<keyword id="KW-0443">Lipid metabolism</keyword>
<keyword id="KW-0547">Nucleotide-binding</keyword>
<keyword id="KW-0808">Transferase</keyword>
<evidence type="ECO:0000255" key="1">
    <source>
        <dbReference type="HAMAP-Rule" id="MF_00409"/>
    </source>
</evidence>
<name>LPXK_FLAJ1</name>
<reference key="1">
    <citation type="journal article" date="2009" name="Appl. Environ. Microbiol.">
        <title>Novel features of the polysaccharide-digesting gliding bacterium Flavobacterium johnsoniae as revealed by genome sequence analysis.</title>
        <authorList>
            <person name="McBride M.J."/>
            <person name="Xie G."/>
            <person name="Martens E.C."/>
            <person name="Lapidus A."/>
            <person name="Henrissat B."/>
            <person name="Rhodes R.G."/>
            <person name="Goltsman E."/>
            <person name="Wang W."/>
            <person name="Xu J."/>
            <person name="Hunnicutt D.W."/>
            <person name="Staroscik A.M."/>
            <person name="Hoover T.R."/>
            <person name="Cheng Y.Q."/>
            <person name="Stein J.L."/>
        </authorList>
    </citation>
    <scope>NUCLEOTIDE SEQUENCE [LARGE SCALE GENOMIC DNA]</scope>
    <source>
        <strain>ATCC 17061 / DSM 2064 / JCM 8514 / BCRC 14874 / CCUG 350202 / NBRC 14942 / NCIMB 11054 / UW101</strain>
    </source>
</reference>
<protein>
    <recommendedName>
        <fullName evidence="1">Tetraacyldisaccharide 4'-kinase</fullName>
        <ecNumber evidence="1">2.7.1.130</ecNumber>
    </recommendedName>
    <alternativeName>
        <fullName evidence="1">Lipid A 4'-kinase</fullName>
    </alternativeName>
</protein>
<gene>
    <name evidence="1" type="primary">lpxK</name>
    <name type="ordered locus">Fjoh_0230</name>
</gene>
<organism>
    <name type="scientific">Flavobacterium johnsoniae (strain ATCC 17061 / DSM 2064 / JCM 8514 / BCRC 14874 / CCUG 350202 / NBRC 14942 / NCIMB 11054 / UW101)</name>
    <name type="common">Cytophaga johnsonae</name>
    <dbReference type="NCBI Taxonomy" id="376686"/>
    <lineage>
        <taxon>Bacteria</taxon>
        <taxon>Pseudomonadati</taxon>
        <taxon>Bacteroidota</taxon>
        <taxon>Flavobacteriia</taxon>
        <taxon>Flavobacteriales</taxon>
        <taxon>Flavobacteriaceae</taxon>
        <taxon>Flavobacterium</taxon>
    </lineage>
</organism>
<accession>A5FNE6</accession>
<dbReference type="EC" id="2.7.1.130" evidence="1"/>
<dbReference type="EMBL" id="CP000685">
    <property type="protein sequence ID" value="ABQ03267.1"/>
    <property type="molecule type" value="Genomic_DNA"/>
</dbReference>
<dbReference type="RefSeq" id="WP_012022338.1">
    <property type="nucleotide sequence ID" value="NC_009441.1"/>
</dbReference>
<dbReference type="SMR" id="A5FNE6"/>
<dbReference type="STRING" id="376686.Fjoh_0230"/>
<dbReference type="KEGG" id="fjo:Fjoh_0230"/>
<dbReference type="eggNOG" id="COG1663">
    <property type="taxonomic scope" value="Bacteria"/>
</dbReference>
<dbReference type="HOGENOM" id="CLU_038816_6_0_10"/>
<dbReference type="OrthoDB" id="9766423at2"/>
<dbReference type="UniPathway" id="UPA00359">
    <property type="reaction ID" value="UER00482"/>
</dbReference>
<dbReference type="Proteomes" id="UP000006694">
    <property type="component" value="Chromosome"/>
</dbReference>
<dbReference type="GO" id="GO:0005886">
    <property type="term" value="C:plasma membrane"/>
    <property type="evidence" value="ECO:0007669"/>
    <property type="project" value="TreeGrafter"/>
</dbReference>
<dbReference type="GO" id="GO:0005524">
    <property type="term" value="F:ATP binding"/>
    <property type="evidence" value="ECO:0007669"/>
    <property type="project" value="UniProtKB-UniRule"/>
</dbReference>
<dbReference type="GO" id="GO:0009029">
    <property type="term" value="F:tetraacyldisaccharide 4'-kinase activity"/>
    <property type="evidence" value="ECO:0007669"/>
    <property type="project" value="UniProtKB-UniRule"/>
</dbReference>
<dbReference type="GO" id="GO:0009245">
    <property type="term" value="P:lipid A biosynthetic process"/>
    <property type="evidence" value="ECO:0007669"/>
    <property type="project" value="UniProtKB-UniRule"/>
</dbReference>
<dbReference type="HAMAP" id="MF_00409">
    <property type="entry name" value="LpxK"/>
    <property type="match status" value="1"/>
</dbReference>
<dbReference type="InterPro" id="IPR003758">
    <property type="entry name" value="LpxK"/>
</dbReference>
<dbReference type="InterPro" id="IPR027417">
    <property type="entry name" value="P-loop_NTPase"/>
</dbReference>
<dbReference type="NCBIfam" id="TIGR00682">
    <property type="entry name" value="lpxK"/>
    <property type="match status" value="1"/>
</dbReference>
<dbReference type="PANTHER" id="PTHR42724">
    <property type="entry name" value="TETRAACYLDISACCHARIDE 4'-KINASE"/>
    <property type="match status" value="1"/>
</dbReference>
<dbReference type="PANTHER" id="PTHR42724:SF1">
    <property type="entry name" value="TETRAACYLDISACCHARIDE 4'-KINASE, MITOCHONDRIAL-RELATED"/>
    <property type="match status" value="1"/>
</dbReference>
<dbReference type="Pfam" id="PF02606">
    <property type="entry name" value="LpxK"/>
    <property type="match status" value="1"/>
</dbReference>
<dbReference type="SUPFAM" id="SSF52540">
    <property type="entry name" value="P-loop containing nucleoside triphosphate hydrolases"/>
    <property type="match status" value="1"/>
</dbReference>
<feature type="chain" id="PRO_0000340834" description="Tetraacyldisaccharide 4'-kinase">
    <location>
        <begin position="1"/>
        <end position="340"/>
    </location>
</feature>
<feature type="binding site" evidence="1">
    <location>
        <begin position="47"/>
        <end position="54"/>
    </location>
    <ligand>
        <name>ATP</name>
        <dbReference type="ChEBI" id="CHEBI:30616"/>
    </ligand>
</feature>
<sequence length="340" mass="38794">MNLLRKILFPFAILYGLITSIRNFLFDKGILKSTSFDLPVIAVGNLSVGGTGKTPQIEYLIRLLSNKYRAATLSRGYKRKSEGFVLADENSNAEILGDEPFQFYQKFPDVQVAVDANRTNGITQLLSQNVKPQVILLDDAYQHRKVKAGFYILLTSYDDLYADDFMLPTGNLRESRSGANRANIVVVTKCPKNLSEEKQAEIRLKLKLSCSQQIFFTYIDYDVEIYGKDEKISAAEIKSESKLLLAGIAKPKPFFEYLKNENDECLTFPDHHHFSDADLESIQNKANGRKIITTEKDYVRLKDSKLVSQLYYLPIKSTFINHQQNFDVSILQYIKENLEP</sequence>